<gene>
    <name type="primary">nr2c1-a</name>
    <name evidence="8" type="synonym">dor2</name>
</gene>
<sequence length="637" mass="70785">MASIEEIAHQIIEQQMGEISRSQTEVSQTALMDGTTQRIQLVPSESNVSVPQRIQIVTDPQTGQKIQIVTALDQSGVSKQFILTNNDGSLPSKVILARQDSNQGKVFLTTPDAAGMNQLFFSSPDVPAQHIQILSDTQSLDQNLNKQLVELCVVCGDKASGRHYGAVTCEGCKGFFKRSIRKNLVYTCRGSKDCVINKHYRNRCQYCRLQRCMSLGMKQDSVQCERKPIEVSREKSSNCAASTEKIYIRKDLRSPLAATTTFVTENKTPRTTSLLDSSMLVNIQQSGVKNESILITPNKVEACQGDLSTLANVVTSLANLNKTNDLPQTNTELSIIESLSNGDSSLSDLAQDDQSSSEVTRAFDTLAKALNQSENSTQGSSECLGSNANLLHDVNVEIEGPLLNDVHIAFRLTMPSPMPEYLNVHYICESASRLLFLSMHWARSIPSFQSLGQENSISLVKACWNELFSLGLAQCSQVMNVETILAAFVNHLQNSMQHDKLSSDKVKLVTDHIFKLQEFCNSMVKLCVDGYEYAYLKAIALFSPDHPGLENVSHIEKLQEKAYMEFQDYVTKTYPEDTYRLSRLLLRLPALRLMNAAITEELFFAGLIGNVQIDSIIPYILRMETSDYNSQIIGLAV</sequence>
<keyword id="KW-0010">Activator</keyword>
<keyword id="KW-0238">DNA-binding</keyword>
<keyword id="KW-0479">Metal-binding</keyword>
<keyword id="KW-0539">Nucleus</keyword>
<keyword id="KW-0675">Receptor</keyword>
<keyword id="KW-1185">Reference proteome</keyword>
<keyword id="KW-0678">Repressor</keyword>
<keyword id="KW-0804">Transcription</keyword>
<keyword id="KW-0805">Transcription regulation</keyword>
<keyword id="KW-0862">Zinc</keyword>
<keyword id="KW-0863">Zinc-finger</keyword>
<dbReference type="EMBL" id="BC073700">
    <property type="protein sequence ID" value="AAH73700.1"/>
    <property type="molecule type" value="mRNA"/>
</dbReference>
<dbReference type="EMBL" id="AF013295">
    <property type="protein sequence ID" value="AAB81178.1"/>
    <property type="molecule type" value="mRNA"/>
</dbReference>
<dbReference type="RefSeq" id="NP_001084198.1">
    <property type="nucleotide sequence ID" value="NM_001090729.1"/>
</dbReference>
<dbReference type="DNASU" id="399361"/>
<dbReference type="GeneID" id="399361"/>
<dbReference type="KEGG" id="xla:399361"/>
<dbReference type="AGR" id="Xenbase:XB-GENE-6254030"/>
<dbReference type="CTD" id="399361"/>
<dbReference type="Xenbase" id="XB-GENE-6254030">
    <property type="gene designation" value="nr2c1.S"/>
</dbReference>
<dbReference type="OrthoDB" id="10024684at2759"/>
<dbReference type="Proteomes" id="UP000186698">
    <property type="component" value="Chromosome 3S"/>
</dbReference>
<dbReference type="Bgee" id="399361">
    <property type="expression patterns" value="Expressed in egg cell and 19 other cell types or tissues"/>
</dbReference>
<dbReference type="GO" id="GO:0005634">
    <property type="term" value="C:nucleus"/>
    <property type="evidence" value="ECO:0000250"/>
    <property type="project" value="UniProtKB"/>
</dbReference>
<dbReference type="GO" id="GO:0003677">
    <property type="term" value="F:DNA binding"/>
    <property type="evidence" value="ECO:0000250"/>
    <property type="project" value="UniProtKB"/>
</dbReference>
<dbReference type="GO" id="GO:0004879">
    <property type="term" value="F:nuclear receptor activity"/>
    <property type="evidence" value="ECO:0000318"/>
    <property type="project" value="GO_Central"/>
</dbReference>
<dbReference type="GO" id="GO:0000978">
    <property type="term" value="F:RNA polymerase II cis-regulatory region sequence-specific DNA binding"/>
    <property type="evidence" value="ECO:0000318"/>
    <property type="project" value="GO_Central"/>
</dbReference>
<dbReference type="GO" id="GO:0008270">
    <property type="term" value="F:zinc ion binding"/>
    <property type="evidence" value="ECO:0007669"/>
    <property type="project" value="UniProtKB-KW"/>
</dbReference>
<dbReference type="GO" id="GO:0030154">
    <property type="term" value="P:cell differentiation"/>
    <property type="evidence" value="ECO:0000318"/>
    <property type="project" value="GO_Central"/>
</dbReference>
<dbReference type="GO" id="GO:0045892">
    <property type="term" value="P:negative regulation of DNA-templated transcription"/>
    <property type="evidence" value="ECO:0000250"/>
    <property type="project" value="UniProtKB"/>
</dbReference>
<dbReference type="GO" id="GO:0000122">
    <property type="term" value="P:negative regulation of transcription by RNA polymerase II"/>
    <property type="evidence" value="ECO:0000250"/>
    <property type="project" value="UniProtKB"/>
</dbReference>
<dbReference type="GO" id="GO:0006357">
    <property type="term" value="P:regulation of transcription by RNA polymerase II"/>
    <property type="evidence" value="ECO:0000318"/>
    <property type="project" value="GO_Central"/>
</dbReference>
<dbReference type="CDD" id="cd06967">
    <property type="entry name" value="NR_DBD_TR2_like"/>
    <property type="match status" value="1"/>
</dbReference>
<dbReference type="CDD" id="cd06952">
    <property type="entry name" value="NR_LBD_TR2_like"/>
    <property type="match status" value="1"/>
</dbReference>
<dbReference type="FunFam" id="1.10.565.10:FF:000012">
    <property type="entry name" value="Nuclear receptor subfamily 2 group C member 1"/>
    <property type="match status" value="1"/>
</dbReference>
<dbReference type="FunFam" id="3.30.50.10:FF:000015">
    <property type="entry name" value="Nuclear receptor subfamily 2, group C, member 1"/>
    <property type="match status" value="1"/>
</dbReference>
<dbReference type="Gene3D" id="3.30.50.10">
    <property type="entry name" value="Erythroid Transcription Factor GATA-1, subunit A"/>
    <property type="match status" value="1"/>
</dbReference>
<dbReference type="Gene3D" id="1.10.565.10">
    <property type="entry name" value="Retinoid X Receptor"/>
    <property type="match status" value="1"/>
</dbReference>
<dbReference type="InterPro" id="IPR035500">
    <property type="entry name" value="NHR-like_dom_sf"/>
</dbReference>
<dbReference type="InterPro" id="IPR048245">
    <property type="entry name" value="NR2C1/2-like_DBD"/>
</dbReference>
<dbReference type="InterPro" id="IPR048246">
    <property type="entry name" value="NR2C1/2-like_LBD"/>
</dbReference>
<dbReference type="InterPro" id="IPR000536">
    <property type="entry name" value="Nucl_hrmn_rcpt_lig-bd"/>
</dbReference>
<dbReference type="InterPro" id="IPR050274">
    <property type="entry name" value="Nuclear_hormone_rcpt_NR2"/>
</dbReference>
<dbReference type="InterPro" id="IPR001723">
    <property type="entry name" value="Nuclear_hrmn_rcpt"/>
</dbReference>
<dbReference type="InterPro" id="IPR001628">
    <property type="entry name" value="Znf_hrmn_rcpt"/>
</dbReference>
<dbReference type="InterPro" id="IPR013088">
    <property type="entry name" value="Znf_NHR/GATA"/>
</dbReference>
<dbReference type="PANTHER" id="PTHR24083">
    <property type="entry name" value="NUCLEAR HORMONE RECEPTOR"/>
    <property type="match status" value="1"/>
</dbReference>
<dbReference type="Pfam" id="PF00104">
    <property type="entry name" value="Hormone_recep"/>
    <property type="match status" value="1"/>
</dbReference>
<dbReference type="Pfam" id="PF00105">
    <property type="entry name" value="zf-C4"/>
    <property type="match status" value="1"/>
</dbReference>
<dbReference type="PRINTS" id="PR01282">
    <property type="entry name" value="COUPTNFACTOR"/>
</dbReference>
<dbReference type="PRINTS" id="PR00398">
    <property type="entry name" value="STRDHORMONER"/>
</dbReference>
<dbReference type="PRINTS" id="PR00047">
    <property type="entry name" value="STROIDFINGER"/>
</dbReference>
<dbReference type="SMART" id="SM00430">
    <property type="entry name" value="HOLI"/>
    <property type="match status" value="1"/>
</dbReference>
<dbReference type="SMART" id="SM00399">
    <property type="entry name" value="ZnF_C4"/>
    <property type="match status" value="1"/>
</dbReference>
<dbReference type="SUPFAM" id="SSF57716">
    <property type="entry name" value="Glucocorticoid receptor-like (DNA-binding domain)"/>
    <property type="match status" value="1"/>
</dbReference>
<dbReference type="SUPFAM" id="SSF48508">
    <property type="entry name" value="Nuclear receptor ligand-binding domain"/>
    <property type="match status" value="1"/>
</dbReference>
<dbReference type="PROSITE" id="PS51843">
    <property type="entry name" value="NR_LBD"/>
    <property type="match status" value="1"/>
</dbReference>
<dbReference type="PROSITE" id="PS00031">
    <property type="entry name" value="NUCLEAR_REC_DBD_1"/>
    <property type="match status" value="1"/>
</dbReference>
<dbReference type="PROSITE" id="PS51030">
    <property type="entry name" value="NUCLEAR_REC_DBD_2"/>
    <property type="match status" value="1"/>
</dbReference>
<feature type="chain" id="PRO_0000287912" description="Nuclear receptor subfamily 2 group C member 1-A">
    <location>
        <begin position="1"/>
        <end position="637"/>
    </location>
</feature>
<feature type="domain" description="NR LBD" evidence="4">
    <location>
        <begin position="383"/>
        <end position="624"/>
    </location>
</feature>
<feature type="DNA-binding region" description="Nuclear receptor" evidence="3">
    <location>
        <begin position="149"/>
        <end position="224"/>
    </location>
</feature>
<feature type="zinc finger region" description="NR C4-type" evidence="3">
    <location>
        <begin position="152"/>
        <end position="172"/>
    </location>
</feature>
<feature type="zinc finger region" description="NR C4-type" evidence="3">
    <location>
        <begin position="188"/>
        <end position="207"/>
    </location>
</feature>
<feature type="sequence conflict" description="In Ref. 2; AAB81178." evidence="6" ref="2">
    <original>QTALMD</original>
    <variation>PLLFVN</variation>
    <location>
        <begin position="28"/>
        <end position="33"/>
    </location>
</feature>
<feature type="sequence conflict" description="In Ref. 2; AAB81178." evidence="6" ref="2">
    <original>L</original>
    <variation>P</variation>
    <location>
        <position position="346"/>
    </location>
</feature>
<feature type="sequence conflict" description="In Ref. 2; AAB81178." evidence="6" ref="2">
    <original>QDY</original>
    <variation>HGI</variation>
    <location>
        <begin position="567"/>
        <end position="569"/>
    </location>
</feature>
<comment type="function">
    <text evidence="1">Orphan nuclear receptor. Binds the IR7 element in the promoter of its own gene in an autoregulatory negative feedback mechanism. Primarily repressor of a broad range of genes. Binds to hormone response elements (HREs) consisting of two 5'-AGGTCA-3' half site direct repeat consensus sequences (By similarity).</text>
</comment>
<comment type="subcellular location">
    <subcellularLocation>
        <location evidence="3">Nucleus</location>
    </subcellularLocation>
</comment>
<comment type="developmental stage">
    <text evidence="5">Expressed at a low level in neurula stage embryos.</text>
</comment>
<comment type="similarity">
    <text evidence="2">Belongs to the nuclear hormone receptor family. NR2 subfamily.</text>
</comment>
<evidence type="ECO:0000250" key="1"/>
<evidence type="ECO:0000255" key="2"/>
<evidence type="ECO:0000255" key="3">
    <source>
        <dbReference type="PROSITE-ProRule" id="PRU00407"/>
    </source>
</evidence>
<evidence type="ECO:0000255" key="4">
    <source>
        <dbReference type="PROSITE-ProRule" id="PRU01189"/>
    </source>
</evidence>
<evidence type="ECO:0000269" key="5">
    <source>
    </source>
</evidence>
<evidence type="ECO:0000305" key="6"/>
<evidence type="ECO:0000312" key="7">
    <source>
        <dbReference type="EMBL" id="AAB81178.1"/>
    </source>
</evidence>
<evidence type="ECO:0000312" key="8">
    <source>
        <dbReference type="EMBL" id="AAH73700.1"/>
    </source>
</evidence>
<proteinExistence type="evidence at transcript level"/>
<reference evidence="8" key="1">
    <citation type="submission" date="2004-06" db="EMBL/GenBank/DDBJ databases">
        <authorList>
            <consortium name="NIH - Xenopus Gene Collection (XGC) project"/>
        </authorList>
    </citation>
    <scope>NUCLEOTIDE SEQUENCE [LARGE SCALE MRNA]</scope>
    <source>
        <tissue evidence="8">Oocyte</tissue>
    </source>
</reference>
<reference evidence="6 7" key="2">
    <citation type="journal article" date="1998" name="DNA Seq.">
        <title>Cloning of a cDNA for xDOR2, a novel TR2-related nuclear orphan receptor, expressed during neurulation in Xenopus laevis embryos.</title>
        <authorList>
            <person name="Huard V."/>
            <person name="Seguin C."/>
        </authorList>
    </citation>
    <scope>NUCLEOTIDE SEQUENCE [MRNA] OF 28-569</scope>
    <scope>DEVELOPMENTAL STAGE</scope>
    <source>
        <tissue evidence="5">Neurula</tissue>
    </source>
</reference>
<organism>
    <name type="scientific">Xenopus laevis</name>
    <name type="common">African clawed frog</name>
    <dbReference type="NCBI Taxonomy" id="8355"/>
    <lineage>
        <taxon>Eukaryota</taxon>
        <taxon>Metazoa</taxon>
        <taxon>Chordata</taxon>
        <taxon>Craniata</taxon>
        <taxon>Vertebrata</taxon>
        <taxon>Euteleostomi</taxon>
        <taxon>Amphibia</taxon>
        <taxon>Batrachia</taxon>
        <taxon>Anura</taxon>
        <taxon>Pipoidea</taxon>
        <taxon>Pipidae</taxon>
        <taxon>Xenopodinae</taxon>
        <taxon>Xenopus</taxon>
        <taxon>Xenopus</taxon>
    </lineage>
</organism>
<protein>
    <recommendedName>
        <fullName>Nuclear receptor subfamily 2 group C member 1-A</fullName>
    </recommendedName>
    <alternativeName>
        <fullName>Developmental orphan receptor 2-A</fullName>
        <shortName>DOR2-A</shortName>
        <shortName>xDOR2-A</shortName>
    </alternativeName>
    <alternativeName>
        <fullName>Orphan nuclear receptor TR2-A</fullName>
    </alternativeName>
    <alternativeName>
        <fullName>Testicular receptor 2-A</fullName>
    </alternativeName>
</protein>
<name>N2C1A_XENLA</name>
<accession>Q6GN21</accession>
<accession>O42177</accession>